<comment type="function">
    <text evidence="4">Peptide which plays a role in the humoral immune response to a subset of filamentous fungi, including F.oxysporum and F.verticillioides.</text>
</comment>
<comment type="subcellular location">
    <subcellularLocation>
        <location evidence="3 4 5">Secreted</location>
    </subcellularLocation>
</comment>
<comment type="tissue specificity">
    <text evidence="3 4 5">Hemolymph (at protein level).</text>
</comment>
<comment type="induction">
    <text evidence="3 4 5">By bacterial infection (at protein level) (PubMed:32038657, PubMed:9736738). Induced by Gram-positive bacteria M.luteus (at protein level) (PubMed:32038657). However, another study found the peptide was present in both immune challenged and unchallenged controls (at protein level) (PubMed:16510152).</text>
</comment>
<comment type="mass spectrometry"/>
<comment type="mass spectrometry"/>
<comment type="mass spectrometry"/>
<comment type="disruption phenotype">
    <text evidence="4">Adult males infected with spores from F.oxysporum or F.verticillioides display reduced survival.</text>
</comment>
<comment type="miscellaneous">
    <text evidence="8">'Daisho' is the Japanese term for a matched pair of samurai swords, one short and one long, and refers to the role of the two Daisho peptides (Dso1 and Dso2) in defense against fungal infection.</text>
</comment>
<feature type="signal peptide" evidence="1">
    <location>
        <begin position="1"/>
        <end position="20"/>
    </location>
</feature>
<feature type="propeptide" id="PRO_0000021494" description="Removed by a dipeptidylpeptidase" evidence="2 5">
    <location>
        <begin position="21"/>
        <end position="26"/>
    </location>
</feature>
<feature type="peptide" id="PRO_0000021495" description="Daisho1">
    <location>
        <begin position="27"/>
        <end position="41"/>
    </location>
</feature>
<feature type="modified residue" description="Threonine amide" evidence="2 5">
    <location>
        <position position="41"/>
    </location>
</feature>
<protein>
    <recommendedName>
        <fullName evidence="8">Daisho1</fullName>
    </recommendedName>
    <alternativeName>
        <fullName evidence="6">Immune-induced peptide 4</fullName>
        <shortName evidence="6">DIM-4</shortName>
    </alternativeName>
</protein>
<accession>P82705</accession>
<accession>A0A0B4LG54</accession>
<accession>Q9W2Q9</accession>
<keyword id="KW-0027">Amidation</keyword>
<keyword id="KW-0903">Direct protein sequencing</keyword>
<keyword id="KW-0391">Immunity</keyword>
<keyword id="KW-0399">Innate immunity</keyword>
<keyword id="KW-1185">Reference proteome</keyword>
<keyword id="KW-0964">Secreted</keyword>
<keyword id="KW-0732">Signal</keyword>
<sequence>MKFFQAAALLLAMFAALANAEPVPQPGTVLIQTDNTQYIRTG</sequence>
<reference key="1">
    <citation type="journal article" date="2000" name="Science">
        <title>The genome sequence of Drosophila melanogaster.</title>
        <authorList>
            <person name="Adams M.D."/>
            <person name="Celniker S.E."/>
            <person name="Holt R.A."/>
            <person name="Evans C.A."/>
            <person name="Gocayne J.D."/>
            <person name="Amanatides P.G."/>
            <person name="Scherer S.E."/>
            <person name="Li P.W."/>
            <person name="Hoskins R.A."/>
            <person name="Galle R.F."/>
            <person name="George R.A."/>
            <person name="Lewis S.E."/>
            <person name="Richards S."/>
            <person name="Ashburner M."/>
            <person name="Henderson S.N."/>
            <person name="Sutton G.G."/>
            <person name="Wortman J.R."/>
            <person name="Yandell M.D."/>
            <person name="Zhang Q."/>
            <person name="Chen L.X."/>
            <person name="Brandon R.C."/>
            <person name="Rogers Y.-H.C."/>
            <person name="Blazej R.G."/>
            <person name="Champe M."/>
            <person name="Pfeiffer B.D."/>
            <person name="Wan K.H."/>
            <person name="Doyle C."/>
            <person name="Baxter E.G."/>
            <person name="Helt G."/>
            <person name="Nelson C.R."/>
            <person name="Miklos G.L.G."/>
            <person name="Abril J.F."/>
            <person name="Agbayani A."/>
            <person name="An H.-J."/>
            <person name="Andrews-Pfannkoch C."/>
            <person name="Baldwin D."/>
            <person name="Ballew R.M."/>
            <person name="Basu A."/>
            <person name="Baxendale J."/>
            <person name="Bayraktaroglu L."/>
            <person name="Beasley E.M."/>
            <person name="Beeson K.Y."/>
            <person name="Benos P.V."/>
            <person name="Berman B.P."/>
            <person name="Bhandari D."/>
            <person name="Bolshakov S."/>
            <person name="Borkova D."/>
            <person name="Botchan M.R."/>
            <person name="Bouck J."/>
            <person name="Brokstein P."/>
            <person name="Brottier P."/>
            <person name="Burtis K.C."/>
            <person name="Busam D.A."/>
            <person name="Butler H."/>
            <person name="Cadieu E."/>
            <person name="Center A."/>
            <person name="Chandra I."/>
            <person name="Cherry J.M."/>
            <person name="Cawley S."/>
            <person name="Dahlke C."/>
            <person name="Davenport L.B."/>
            <person name="Davies P."/>
            <person name="de Pablos B."/>
            <person name="Delcher A."/>
            <person name="Deng Z."/>
            <person name="Mays A.D."/>
            <person name="Dew I."/>
            <person name="Dietz S.M."/>
            <person name="Dodson K."/>
            <person name="Doup L.E."/>
            <person name="Downes M."/>
            <person name="Dugan-Rocha S."/>
            <person name="Dunkov B.C."/>
            <person name="Dunn P."/>
            <person name="Durbin K.J."/>
            <person name="Evangelista C.C."/>
            <person name="Ferraz C."/>
            <person name="Ferriera S."/>
            <person name="Fleischmann W."/>
            <person name="Fosler C."/>
            <person name="Gabrielian A.E."/>
            <person name="Garg N.S."/>
            <person name="Gelbart W.M."/>
            <person name="Glasser K."/>
            <person name="Glodek A."/>
            <person name="Gong F."/>
            <person name="Gorrell J.H."/>
            <person name="Gu Z."/>
            <person name="Guan P."/>
            <person name="Harris M."/>
            <person name="Harris N.L."/>
            <person name="Harvey D.A."/>
            <person name="Heiman T.J."/>
            <person name="Hernandez J.R."/>
            <person name="Houck J."/>
            <person name="Hostin D."/>
            <person name="Houston K.A."/>
            <person name="Howland T.J."/>
            <person name="Wei M.-H."/>
            <person name="Ibegwam C."/>
            <person name="Jalali M."/>
            <person name="Kalush F."/>
            <person name="Karpen G.H."/>
            <person name="Ke Z."/>
            <person name="Kennison J.A."/>
            <person name="Ketchum K.A."/>
            <person name="Kimmel B.E."/>
            <person name="Kodira C.D."/>
            <person name="Kraft C.L."/>
            <person name="Kravitz S."/>
            <person name="Kulp D."/>
            <person name="Lai Z."/>
            <person name="Lasko P."/>
            <person name="Lei Y."/>
            <person name="Levitsky A.A."/>
            <person name="Li J.H."/>
            <person name="Li Z."/>
            <person name="Liang Y."/>
            <person name="Lin X."/>
            <person name="Liu X."/>
            <person name="Mattei B."/>
            <person name="McIntosh T.C."/>
            <person name="McLeod M.P."/>
            <person name="McPherson D."/>
            <person name="Merkulov G."/>
            <person name="Milshina N.V."/>
            <person name="Mobarry C."/>
            <person name="Morris J."/>
            <person name="Moshrefi A."/>
            <person name="Mount S.M."/>
            <person name="Moy M."/>
            <person name="Murphy B."/>
            <person name="Murphy L."/>
            <person name="Muzny D.M."/>
            <person name="Nelson D.L."/>
            <person name="Nelson D.R."/>
            <person name="Nelson K.A."/>
            <person name="Nixon K."/>
            <person name="Nusskern D.R."/>
            <person name="Pacleb J.M."/>
            <person name="Palazzolo M."/>
            <person name="Pittman G.S."/>
            <person name="Pan S."/>
            <person name="Pollard J."/>
            <person name="Puri V."/>
            <person name="Reese M.G."/>
            <person name="Reinert K."/>
            <person name="Remington K."/>
            <person name="Saunders R.D.C."/>
            <person name="Scheeler F."/>
            <person name="Shen H."/>
            <person name="Shue B.C."/>
            <person name="Siden-Kiamos I."/>
            <person name="Simpson M."/>
            <person name="Skupski M.P."/>
            <person name="Smith T.J."/>
            <person name="Spier E."/>
            <person name="Spradling A.C."/>
            <person name="Stapleton M."/>
            <person name="Strong R."/>
            <person name="Sun E."/>
            <person name="Svirskas R."/>
            <person name="Tector C."/>
            <person name="Turner R."/>
            <person name="Venter E."/>
            <person name="Wang A.H."/>
            <person name="Wang X."/>
            <person name="Wang Z.-Y."/>
            <person name="Wassarman D.A."/>
            <person name="Weinstock G.M."/>
            <person name="Weissenbach J."/>
            <person name="Williams S.M."/>
            <person name="Woodage T."/>
            <person name="Worley K.C."/>
            <person name="Wu D."/>
            <person name="Yang S."/>
            <person name="Yao Q.A."/>
            <person name="Ye J."/>
            <person name="Yeh R.-F."/>
            <person name="Zaveri J.S."/>
            <person name="Zhan M."/>
            <person name="Zhang G."/>
            <person name="Zhao Q."/>
            <person name="Zheng L."/>
            <person name="Zheng X.H."/>
            <person name="Zhong F.N."/>
            <person name="Zhong W."/>
            <person name="Zhou X."/>
            <person name="Zhu S.C."/>
            <person name="Zhu X."/>
            <person name="Smith H.O."/>
            <person name="Gibbs R.A."/>
            <person name="Myers E.W."/>
            <person name="Rubin G.M."/>
            <person name="Venter J.C."/>
        </authorList>
    </citation>
    <scope>NUCLEOTIDE SEQUENCE [LARGE SCALE GENOMIC DNA]</scope>
    <source>
        <strain>Berkeley</strain>
    </source>
</reference>
<reference key="2">
    <citation type="journal article" date="2002" name="Genome Biol.">
        <title>Annotation of the Drosophila melanogaster euchromatic genome: a systematic review.</title>
        <authorList>
            <person name="Misra S."/>
            <person name="Crosby M.A."/>
            <person name="Mungall C.J."/>
            <person name="Matthews B.B."/>
            <person name="Campbell K.S."/>
            <person name="Hradecky P."/>
            <person name="Huang Y."/>
            <person name="Kaminker J.S."/>
            <person name="Millburn G.H."/>
            <person name="Prochnik S.E."/>
            <person name="Smith C.D."/>
            <person name="Tupy J.L."/>
            <person name="Whitfield E.J."/>
            <person name="Bayraktaroglu L."/>
            <person name="Berman B.P."/>
            <person name="Bettencourt B.R."/>
            <person name="Celniker S.E."/>
            <person name="de Grey A.D.N.J."/>
            <person name="Drysdale R.A."/>
            <person name="Harris N.L."/>
            <person name="Richter J."/>
            <person name="Russo S."/>
            <person name="Schroeder A.J."/>
            <person name="Shu S.Q."/>
            <person name="Stapleton M."/>
            <person name="Yamada C."/>
            <person name="Ashburner M."/>
            <person name="Gelbart W.M."/>
            <person name="Rubin G.M."/>
            <person name="Lewis S.E."/>
        </authorList>
    </citation>
    <scope>GENOME REANNOTATION</scope>
    <source>
        <strain>Berkeley</strain>
    </source>
</reference>
<reference key="3">
    <citation type="journal article" date="2002" name="Genome Biol.">
        <title>A Drosophila full-length cDNA resource.</title>
        <authorList>
            <person name="Stapleton M."/>
            <person name="Carlson J.W."/>
            <person name="Brokstein P."/>
            <person name="Yu C."/>
            <person name="Champe M."/>
            <person name="George R.A."/>
            <person name="Guarin H."/>
            <person name="Kronmiller B."/>
            <person name="Pacleb J.M."/>
            <person name="Park S."/>
            <person name="Wan K.H."/>
            <person name="Rubin G.M."/>
            <person name="Celniker S.E."/>
        </authorList>
    </citation>
    <scope>NUCLEOTIDE SEQUENCE [LARGE SCALE MRNA]</scope>
    <source>
        <strain>Berkeley</strain>
        <tissue>Head</tissue>
    </source>
</reference>
<reference evidence="10" key="4">
    <citation type="submission" date="2016-07" db="EMBL/GenBank/DDBJ databases">
        <authorList>
            <person name="Wan K."/>
            <person name="Booth B."/>
            <person name="Spirohn K."/>
            <person name="Hao T."/>
            <person name="Hu Y."/>
            <person name="Calderwood M."/>
            <person name="Hill D."/>
            <person name="Mohr S."/>
            <person name="Vidal M."/>
            <person name="Celniker S."/>
            <person name="Perrimon N."/>
        </authorList>
    </citation>
    <scope>NUCLEOTIDE SEQUENCE [LARGE SCALE MRNA]</scope>
</reference>
<reference key="5">
    <citation type="journal article" date="1998" name="Proc. Natl. Acad. Sci. U.S.A.">
        <title>Differential display of peptides induced during the immune response of Drosophila: a matrix-assisted laser desorption ionization time-of-flight mass spectrometry study.</title>
        <authorList>
            <person name="Uttenweiler-Joseph S."/>
            <person name="Moniatte M."/>
            <person name="Lagueux M."/>
            <person name="van Dorsselaer A."/>
            <person name="Hoffmann J.A."/>
            <person name="Bulet P."/>
        </authorList>
    </citation>
    <scope>PROTEIN SEQUENCE OF 27-41</scope>
    <scope>AMIDATION AT THR-41</scope>
    <scope>SUBCELLULAR LOCATION</scope>
    <scope>TISSUE SPECIFICITY</scope>
    <scope>INDUCTION BY BACTERIA</scope>
    <scope>MASS SPECTROMETRY</scope>
    <source>
        <strain evidence="9">Oregon-R</strain>
        <tissue evidence="9">Hemolymph</tissue>
    </source>
</reference>
<reference key="6">
    <citation type="journal article" date="2002" name="J. Biol. Chem.">
        <title>Peptidomics of the larval Drosophila melanogaster central nervous system.</title>
        <authorList>
            <person name="Baggerman G."/>
            <person name="Cerstiaens A."/>
            <person name="De Loof A."/>
            <person name="Schoofs L."/>
        </authorList>
    </citation>
    <scope>PROTEIN SEQUENCE OF 27-41</scope>
    <scope>AMIDATION AT THR-41</scope>
    <source>
        <tissue>Larva</tissue>
    </source>
</reference>
<reference key="7">
    <citation type="journal article" date="2006" name="J. Insect Physiol.">
        <title>Identification of new immune induced molecules in the haemolymph of Drosophila melanogaster by 2D-nanoLC MS/MS.</title>
        <authorList>
            <person name="Verleyen P."/>
            <person name="Baggerman G."/>
            <person name="D'Hertog W."/>
            <person name="Vierstraete E."/>
            <person name="Husson S.J."/>
            <person name="Schoofs L."/>
        </authorList>
    </citation>
    <scope>SUBCELLULAR LOCATION</scope>
    <scope>TISSUE SPECIFICITY</scope>
    <scope>INDUCTION BY BACTERIA</scope>
    <scope>IDENTIFICATION BY MASS SPECTROMETRY</scope>
    <source>
        <tissue evidence="7">Hemolymph</tissue>
    </source>
</reference>
<reference key="8">
    <citation type="journal article" date="2020" name="Front. Immunol.">
        <title>The Daisho Peptides Mediate Drosophila Defense Against a Subset of Filamentous Fungi.</title>
        <authorList>
            <person name="Cohen L.B."/>
            <person name="Lindsay S.A."/>
            <person name="Xu Y."/>
            <person name="Lin S.J.H."/>
            <person name="Wasserman S.A."/>
        </authorList>
    </citation>
    <scope>FUNCTION</scope>
    <scope>SUBCELLULAR LOCATION</scope>
    <scope>TISSUE SPECIFICITY</scope>
    <scope>INDUCTION BY BACTERIA</scope>
    <scope>MASS SPECTROMETRY</scope>
    <scope>DISRUPTION PHENOTYPE</scope>
</reference>
<name>DSO1_DROME</name>
<proteinExistence type="evidence at protein level"/>
<dbReference type="EMBL" id="AE013599">
    <property type="protein sequence ID" value="AAF46631.1"/>
    <property type="molecule type" value="Genomic_DNA"/>
</dbReference>
<dbReference type="EMBL" id="AE013599">
    <property type="protein sequence ID" value="AHN56443.1"/>
    <property type="molecule type" value="Genomic_DNA"/>
</dbReference>
<dbReference type="EMBL" id="AY070691">
    <property type="protein sequence ID" value="AAL48162.1"/>
    <property type="molecule type" value="mRNA"/>
</dbReference>
<dbReference type="EMBL" id="KX531880">
    <property type="protein sequence ID" value="ANY27690.1"/>
    <property type="molecule type" value="mRNA"/>
</dbReference>
<dbReference type="RefSeq" id="NP_001286648.1">
    <property type="nucleotide sequence ID" value="NM_001299719.1"/>
</dbReference>
<dbReference type="RefSeq" id="NP_652295.1">
    <property type="nucleotide sequence ID" value="NM_144038.3"/>
</dbReference>
<dbReference type="BioGRID" id="72555">
    <property type="interactions" value="4"/>
</dbReference>
<dbReference type="DIP" id="DIP-21088N"/>
<dbReference type="FunCoup" id="P82705">
    <property type="interactions" value="130"/>
</dbReference>
<dbReference type="IntAct" id="P82705">
    <property type="interactions" value="1"/>
</dbReference>
<dbReference type="STRING" id="7227.FBpp0311805"/>
<dbReference type="PaxDb" id="7227-FBpp0071487"/>
<dbReference type="DNASU" id="50126"/>
<dbReference type="EnsemblMetazoa" id="FBtr0071559">
    <property type="protein sequence ID" value="FBpp0071487"/>
    <property type="gene ID" value="FBgn0040653"/>
</dbReference>
<dbReference type="EnsemblMetazoa" id="FBtr0345819">
    <property type="protein sequence ID" value="FBpp0311805"/>
    <property type="gene ID" value="FBgn0040653"/>
</dbReference>
<dbReference type="GeneID" id="50126"/>
<dbReference type="KEGG" id="dme:Dmel_CG15231"/>
<dbReference type="AGR" id="FB:FBgn0040653"/>
<dbReference type="CTD" id="50126"/>
<dbReference type="FlyBase" id="FBgn0040653">
    <property type="gene designation" value="Dso1"/>
</dbReference>
<dbReference type="VEuPathDB" id="VectorBase:FBgn0040653"/>
<dbReference type="eggNOG" id="ENOG502R3CT">
    <property type="taxonomic scope" value="Eukaryota"/>
</dbReference>
<dbReference type="HOGENOM" id="CLU_3261061_0_0_1"/>
<dbReference type="InParanoid" id="P82705"/>
<dbReference type="PhylomeDB" id="P82705"/>
<dbReference type="BioGRID-ORCS" id="50126">
    <property type="hits" value="0 hits in 1 CRISPR screen"/>
</dbReference>
<dbReference type="ChiTaRS" id="IM4">
    <property type="organism name" value="fly"/>
</dbReference>
<dbReference type="GenomeRNAi" id="50126"/>
<dbReference type="PRO" id="PR:P82705"/>
<dbReference type="Proteomes" id="UP000000803">
    <property type="component" value="Chromosome 2R"/>
</dbReference>
<dbReference type="Bgee" id="FBgn0040653">
    <property type="expression patterns" value="Expressed in visual pigment cell (sensu Nematoda and Protostomia) in testis and 171 other cell types or tissues"/>
</dbReference>
<dbReference type="ExpressionAtlas" id="P82705">
    <property type="expression patterns" value="baseline and differential"/>
</dbReference>
<dbReference type="GO" id="GO:0005576">
    <property type="term" value="C:extracellular region"/>
    <property type="evidence" value="ECO:0000314"/>
    <property type="project" value="UniProtKB"/>
</dbReference>
<dbReference type="GO" id="GO:0005615">
    <property type="term" value="C:extracellular space"/>
    <property type="evidence" value="ECO:0000314"/>
    <property type="project" value="UniProtKB"/>
</dbReference>
<dbReference type="GO" id="GO:0019732">
    <property type="term" value="P:antifungal humoral response"/>
    <property type="evidence" value="ECO:0000314"/>
    <property type="project" value="UniProtKB"/>
</dbReference>
<dbReference type="GO" id="GO:0006952">
    <property type="term" value="P:defense response"/>
    <property type="evidence" value="ECO:0000314"/>
    <property type="project" value="UniProtKB"/>
</dbReference>
<dbReference type="GO" id="GO:0006959">
    <property type="term" value="P:humoral immune response"/>
    <property type="evidence" value="ECO:0000270"/>
    <property type="project" value="FlyBase"/>
</dbReference>
<dbReference type="GO" id="GO:0045087">
    <property type="term" value="P:innate immune response"/>
    <property type="evidence" value="ECO:0007669"/>
    <property type="project" value="UniProtKB-KW"/>
</dbReference>
<dbReference type="GO" id="GO:0009617">
    <property type="term" value="P:response to bacterium"/>
    <property type="evidence" value="ECO:0007007"/>
    <property type="project" value="FlyBase"/>
</dbReference>
<organism>
    <name type="scientific">Drosophila melanogaster</name>
    <name type="common">Fruit fly</name>
    <dbReference type="NCBI Taxonomy" id="7227"/>
    <lineage>
        <taxon>Eukaryota</taxon>
        <taxon>Metazoa</taxon>
        <taxon>Ecdysozoa</taxon>
        <taxon>Arthropoda</taxon>
        <taxon>Hexapoda</taxon>
        <taxon>Insecta</taxon>
        <taxon>Pterygota</taxon>
        <taxon>Neoptera</taxon>
        <taxon>Endopterygota</taxon>
        <taxon>Diptera</taxon>
        <taxon>Brachycera</taxon>
        <taxon>Muscomorpha</taxon>
        <taxon>Ephydroidea</taxon>
        <taxon>Drosophilidae</taxon>
        <taxon>Drosophila</taxon>
        <taxon>Sophophora</taxon>
    </lineage>
</organism>
<gene>
    <name evidence="8 11" type="primary">Dso1</name>
    <name evidence="11" type="synonym">IM4</name>
    <name evidence="11" type="ORF">CG15231</name>
</gene>
<evidence type="ECO:0000255" key="1"/>
<evidence type="ECO:0000269" key="2">
    <source>
    </source>
</evidence>
<evidence type="ECO:0000269" key="3">
    <source>
    </source>
</evidence>
<evidence type="ECO:0000269" key="4">
    <source>
    </source>
</evidence>
<evidence type="ECO:0000269" key="5">
    <source>
    </source>
</evidence>
<evidence type="ECO:0000303" key="6">
    <source>
    </source>
</evidence>
<evidence type="ECO:0000303" key="7">
    <source>
    </source>
</evidence>
<evidence type="ECO:0000303" key="8">
    <source>
    </source>
</evidence>
<evidence type="ECO:0000303" key="9">
    <source>
    </source>
</evidence>
<evidence type="ECO:0000312" key="10">
    <source>
        <dbReference type="EMBL" id="ANY27690.1"/>
    </source>
</evidence>
<evidence type="ECO:0000312" key="11">
    <source>
        <dbReference type="FlyBase" id="FBgn0040653"/>
    </source>
</evidence>